<reference key="1">
    <citation type="journal article" date="1998" name="J. Biol. Chem.">
        <title>Identification and characterization of novel clathrin adaptor-related proteins.</title>
        <authorList>
            <person name="Takatsu H."/>
            <person name="Sakurai M."/>
            <person name="Shin H.-W."/>
            <person name="Murakami K."/>
            <person name="Nakayama K."/>
        </authorList>
    </citation>
    <scope>NUCLEOTIDE SEQUENCE [MRNA]</scope>
    <scope>FUNCTION</scope>
    <scope>SUBCELLULAR LOCATION</scope>
    <scope>NEGATIVE INTERACTION WITH APB1</scope>
    <scope>INTERACTION WITH AP1S1 AND AP1S2</scope>
    <source>
        <tissue>Liver</tissue>
    </source>
</reference>
<reference key="2">
    <citation type="journal article" date="1998" name="FEBS Lett.">
        <title>Cloning, expression, and localization of a novel gamma-adaptin-like molecule.</title>
        <authorList>
            <person name="Lewin D.A."/>
            <person name="Sheff D."/>
            <person name="Ooi C.E."/>
            <person name="Whitney J.A."/>
            <person name="Yamamoto E."/>
            <person name="Chicione L.M."/>
            <person name="Webster P."/>
            <person name="Bonifacino J.S."/>
            <person name="Mellman I."/>
        </authorList>
    </citation>
    <scope>NUCLEOTIDE SEQUENCE [MRNA]</scope>
    <scope>SUBCELLULAR LOCATION</scope>
</reference>
<reference key="3">
    <citation type="submission" date="2005-09" db="EMBL/GenBank/DDBJ databases">
        <authorList>
            <person name="Mural R.J."/>
            <person name="Istrail S."/>
            <person name="Sutton G.G."/>
            <person name="Florea L."/>
            <person name="Halpern A.L."/>
            <person name="Mobarry C.M."/>
            <person name="Lippert R."/>
            <person name="Walenz B."/>
            <person name="Shatkay H."/>
            <person name="Dew I."/>
            <person name="Miller J.R."/>
            <person name="Flanigan M.J."/>
            <person name="Edwards N.J."/>
            <person name="Bolanos R."/>
            <person name="Fasulo D."/>
            <person name="Halldorsson B.V."/>
            <person name="Hannenhalli S."/>
            <person name="Turner R."/>
            <person name="Yooseph S."/>
            <person name="Lu F."/>
            <person name="Nusskern D.R."/>
            <person name="Shue B.C."/>
            <person name="Zheng X.H."/>
            <person name="Zhong F."/>
            <person name="Delcher A.L."/>
            <person name="Huson D.H."/>
            <person name="Kravitz S.A."/>
            <person name="Mouchard L."/>
            <person name="Reinert K."/>
            <person name="Remington K.A."/>
            <person name="Clark A.G."/>
            <person name="Waterman M.S."/>
            <person name="Eichler E.E."/>
            <person name="Adams M.D."/>
            <person name="Hunkapiller M.W."/>
            <person name="Myers E.W."/>
            <person name="Venter J.C."/>
        </authorList>
    </citation>
    <scope>NUCLEOTIDE SEQUENCE [LARGE SCALE GENOMIC DNA]</scope>
</reference>
<reference key="4">
    <citation type="journal article" date="2001" name="J. Virol.">
        <title>Hepatitis B virus large envelope protein interacts with gamma2-adaptin, a clathrin adaptor-related protein.</title>
        <authorList>
            <person name="Hartmann-Stuehler C."/>
            <person name="Prange R."/>
        </authorList>
    </citation>
    <scope>INTERACTION WITH HBV MAJOR SURFACE ANTIGEN L (MICROBIAL INFECTION)</scope>
    <scope>SUBCELLULAR LOCATION</scope>
</reference>
<reference key="5">
    <citation type="journal article" date="2004" name="J. Biol. Chem.">
        <title>Definition of the consensus motif recognized by gamma-adaptin ear domains.</title>
        <authorList>
            <person name="Mattera R."/>
            <person name="Ritter B."/>
            <person name="Sidhu S.S."/>
            <person name="McPherson P.S."/>
            <person name="Bonifacino J.S."/>
        </authorList>
    </citation>
    <scope>INTERACTION WITH RABEP1; CLINT1; NECAP1 AND AFTPH</scope>
</reference>
<reference key="6">
    <citation type="journal article" date="2006" name="J. Biol. Chem.">
        <title>Gamma-adaptin, a novel ubiquitin-interacting adaptor, and Nedd4 ubiquitin ligase control hepatitis B virus maturation.</title>
        <authorList>
            <person name="Rost M."/>
            <person name="Mann S."/>
            <person name="Lambert C."/>
            <person name="Doring T."/>
            <person name="Thome N."/>
            <person name="Prange R."/>
        </authorList>
    </citation>
    <scope>FUNCTION (MICROBIAL INFECTION)</scope>
    <scope>SUBCELLULAR LOCATION</scope>
    <scope>INTERACTION WITH HBV CORE PROTEIN (MICROBIAL INFECTION) AND UBIQUITIN</scope>
    <scope>MUTAGENESIS OF LEU-369; ALA-372 AND SER-376</scope>
</reference>
<reference key="7">
    <citation type="journal article" date="2007" name="J. Virol.">
        <title>Hepatitis B virus maturation is sensitive to functional inhibition of ESCRT-III, Vps4, and gamma 2-adaptin.</title>
        <authorList>
            <person name="Lambert C."/>
            <person name="Doering T."/>
            <person name="Prange R."/>
        </authorList>
    </citation>
    <scope>FUNCTION (MICROBIAL INFECTION)</scope>
</reference>
<reference key="8">
    <citation type="journal article" date="2011" name="BMC Syst. Biol.">
        <title>Initial characterization of the human central proteome.</title>
        <authorList>
            <person name="Burkard T.R."/>
            <person name="Planyavsky M."/>
            <person name="Kaupe I."/>
            <person name="Breitwieser F.P."/>
            <person name="Buerckstuemmer T."/>
            <person name="Bennett K.L."/>
            <person name="Superti-Furga G."/>
            <person name="Colinge J."/>
        </authorList>
    </citation>
    <scope>IDENTIFICATION BY MASS SPECTROMETRY [LARGE SCALE ANALYSIS]</scope>
</reference>
<reference key="9">
    <citation type="journal article" date="2012" name="Proc. Natl. Acad. Sci. U.S.A.">
        <title>N-terminal acetylome analyses and functional insights of the N-terminal acetyltransferase NatB.</title>
        <authorList>
            <person name="Van Damme P."/>
            <person name="Lasa M."/>
            <person name="Polevoda B."/>
            <person name="Gazquez C."/>
            <person name="Elosegui-Artola A."/>
            <person name="Kim D.S."/>
            <person name="De Juan-Pardo E."/>
            <person name="Demeyer K."/>
            <person name="Hole K."/>
            <person name="Larrea E."/>
            <person name="Timmerman E."/>
            <person name="Prieto J."/>
            <person name="Arnesen T."/>
            <person name="Sherman F."/>
            <person name="Gevaert K."/>
            <person name="Aldabe R."/>
        </authorList>
    </citation>
    <scope>IDENTIFICATION BY MASS SPECTROMETRY [LARGE SCALE ANALYSIS]</scope>
</reference>
<reference key="10">
    <citation type="submission" date="2007-07" db="PDB data bank">
        <title>Solution structure of the alpha adaptin C2 domain from human adapter-related protein complex 1 gamma 2 subunit.</title>
        <authorList>
            <consortium name="RIKEN structural genomics initiative (RSGI)"/>
        </authorList>
    </citation>
    <scope>STRUCTURE BY NMR OF 662-785</scope>
</reference>
<sequence length="785" mass="87117">MVVPSLKLQDLIEEIRGAKTQAQEREVIQKECAHIRASFRDGDPVHRHRQLAKLLYVHMLGYPAHFGQMECLKLIASSRFTDKRVGYLGAMLLLDERHDAHLLITNSIKNDLSQGIQPVQGLALCTLSTMGSAEMCRDLAPEVEKLLLQPSPYVRKKAILTAVHMIRKVPELSSVFLPPCAQLLHERHHGILLGTITLITELCERSPAALRHFRKVVPQLVHILRTLVTMGYSTEHSISGVSDPFLQVQILRLLRILGRNHEESSETMNDLLAQVATNTDTSRNAGNAVLFETVLTIMDIRSAAGLRVLAVNILGRFLLNSDRNIRYVALTSLLRLVQSDHSAVQRHRPTVVECLRETDASLSRRALELSLALVNSSNVRAMMQELQAFLESCPPDLRADCASGILLAAERFAPTKRWHIDTILHVLTTAGTHVRDDAVANLTQLIGGAQELHAYSVRRLYNALAEDISQQPLVQVAAWCIGEYGDLLLAGNCEEIEPLQVDEEEVLALLEKVLQSHMSLPATRGYALTALMKLSTRLCGDNNRIRQVVSIYGSCLDVELQQRAVEYDTLFRKYDHMRAAILEKMPLVERDGPQADEEAKESKEAAQLSEAAPVPTEPQASQLLDLLDLLDGASGDVQHPPHLDPSPGGALVHLLDLPCVPPPPAPIPDLKVFEREGVQLNLSFIRPPENPALLLITITATNFSEGDVTHFICQAAVPKSLQLQLQAPSGNTVPARGGLPITQLFRILNPNKAPLRLKLRLTYDHFHQSVQEIFEVNNLPVESWQ</sequence>
<dbReference type="EMBL" id="AB015318">
    <property type="protein sequence ID" value="BAA33390.1"/>
    <property type="molecule type" value="mRNA"/>
</dbReference>
<dbReference type="EMBL" id="AF068706">
    <property type="protein sequence ID" value="AAC67390.1"/>
    <property type="status" value="ALT_FRAME"/>
    <property type="molecule type" value="mRNA"/>
</dbReference>
<dbReference type="EMBL" id="CH471078">
    <property type="protein sequence ID" value="EAW66132.1"/>
    <property type="molecule type" value="Genomic_DNA"/>
</dbReference>
<dbReference type="EMBL" id="CH471078">
    <property type="protein sequence ID" value="EAW66134.1"/>
    <property type="molecule type" value="Genomic_DNA"/>
</dbReference>
<dbReference type="EMBL" id="CH471078">
    <property type="protein sequence ID" value="EAW66138.1"/>
    <property type="molecule type" value="Genomic_DNA"/>
</dbReference>
<dbReference type="CCDS" id="CCDS9602.1"/>
<dbReference type="RefSeq" id="NP_003908.1">
    <property type="nucleotide sequence ID" value="NM_003917.5"/>
</dbReference>
<dbReference type="RefSeq" id="XP_005268229.1">
    <property type="nucleotide sequence ID" value="XM_005268172.4"/>
</dbReference>
<dbReference type="RefSeq" id="XP_005268230.1">
    <property type="nucleotide sequence ID" value="XM_005268173.4"/>
</dbReference>
<dbReference type="RefSeq" id="XP_047287810.1">
    <property type="nucleotide sequence ID" value="XM_047431854.1"/>
</dbReference>
<dbReference type="RefSeq" id="XP_047287811.1">
    <property type="nucleotide sequence ID" value="XM_047431855.1"/>
</dbReference>
<dbReference type="RefSeq" id="XP_054232864.1">
    <property type="nucleotide sequence ID" value="XM_054376889.1"/>
</dbReference>
<dbReference type="RefSeq" id="XP_054232865.1">
    <property type="nucleotide sequence ID" value="XM_054376890.1"/>
</dbReference>
<dbReference type="RefSeq" id="XP_054232866.1">
    <property type="nucleotide sequence ID" value="XM_054376891.1"/>
</dbReference>
<dbReference type="PDB" id="2E9G">
    <property type="method" value="NMR"/>
    <property type="chains" value="A=662-785"/>
</dbReference>
<dbReference type="PDB" id="2YMT">
    <property type="method" value="X-ray"/>
    <property type="resolution" value="1.80 A"/>
    <property type="chains" value="A=665-785"/>
</dbReference>
<dbReference type="PDB" id="3ZHF">
    <property type="method" value="X-ray"/>
    <property type="resolution" value="1.70 A"/>
    <property type="chains" value="A=665-785"/>
</dbReference>
<dbReference type="PDB" id="4BCX">
    <property type="method" value="X-ray"/>
    <property type="resolution" value="2.00 A"/>
    <property type="chains" value="A=665-785"/>
</dbReference>
<dbReference type="PDBsum" id="2E9G"/>
<dbReference type="PDBsum" id="2YMT"/>
<dbReference type="PDBsum" id="3ZHF"/>
<dbReference type="PDBsum" id="4BCX"/>
<dbReference type="BMRB" id="O75843"/>
<dbReference type="SMR" id="O75843"/>
<dbReference type="BioGRID" id="114420">
    <property type="interactions" value="83"/>
</dbReference>
<dbReference type="CORUM" id="O75843"/>
<dbReference type="DIP" id="DIP-31185N"/>
<dbReference type="FunCoup" id="O75843">
    <property type="interactions" value="1545"/>
</dbReference>
<dbReference type="IntAct" id="O75843">
    <property type="interactions" value="54"/>
</dbReference>
<dbReference type="MINT" id="O75843"/>
<dbReference type="STRING" id="9606.ENSP00000312442"/>
<dbReference type="GlyGen" id="O75843">
    <property type="glycosylation" value="1 site, 1 O-linked glycan (1 site)"/>
</dbReference>
<dbReference type="iPTMnet" id="O75843"/>
<dbReference type="PhosphoSitePlus" id="O75843"/>
<dbReference type="BioMuta" id="AP1G2"/>
<dbReference type="jPOST" id="O75843"/>
<dbReference type="MassIVE" id="O75843"/>
<dbReference type="PaxDb" id="9606-ENSP00000312442"/>
<dbReference type="PeptideAtlas" id="O75843"/>
<dbReference type="ProteomicsDB" id="50225"/>
<dbReference type="Pumba" id="O75843"/>
<dbReference type="Antibodypedia" id="110">
    <property type="antibodies" value="69 antibodies from 16 providers"/>
</dbReference>
<dbReference type="DNASU" id="8906"/>
<dbReference type="Ensembl" id="ENST00000308724.9">
    <property type="protein sequence ID" value="ENSP00000312442.5"/>
    <property type="gene ID" value="ENSG00000213983.12"/>
</dbReference>
<dbReference type="Ensembl" id="ENST00000397120.8">
    <property type="protein sequence ID" value="ENSP00000380309.3"/>
    <property type="gene ID" value="ENSG00000213983.12"/>
</dbReference>
<dbReference type="GeneID" id="8906"/>
<dbReference type="KEGG" id="hsa:8906"/>
<dbReference type="MANE-Select" id="ENST00000397120.8">
    <property type="protein sequence ID" value="ENSP00000380309.3"/>
    <property type="RefSeq nucleotide sequence ID" value="NM_003917.5"/>
    <property type="RefSeq protein sequence ID" value="NP_003908.1"/>
</dbReference>
<dbReference type="UCSC" id="uc001wkl.4">
    <property type="organism name" value="human"/>
</dbReference>
<dbReference type="AGR" id="HGNC:556"/>
<dbReference type="CTD" id="8906"/>
<dbReference type="DisGeNET" id="8906"/>
<dbReference type="GeneCards" id="AP1G2"/>
<dbReference type="HGNC" id="HGNC:556">
    <property type="gene designation" value="AP1G2"/>
</dbReference>
<dbReference type="HPA" id="ENSG00000213983">
    <property type="expression patterns" value="Low tissue specificity"/>
</dbReference>
<dbReference type="MIM" id="603534">
    <property type="type" value="gene"/>
</dbReference>
<dbReference type="neXtProt" id="NX_O75843"/>
<dbReference type="OpenTargets" id="ENSG00000213983"/>
<dbReference type="PharmGKB" id="PA24846"/>
<dbReference type="VEuPathDB" id="HostDB:ENSG00000213983"/>
<dbReference type="eggNOG" id="KOG1062">
    <property type="taxonomic scope" value="Eukaryota"/>
</dbReference>
<dbReference type="GeneTree" id="ENSGT00950000182838"/>
<dbReference type="HOGENOM" id="CLU_003824_0_0_1"/>
<dbReference type="InParanoid" id="O75843"/>
<dbReference type="OMA" id="REPNTKK"/>
<dbReference type="OrthoDB" id="28053at2759"/>
<dbReference type="PAN-GO" id="O75843">
    <property type="GO annotations" value="4 GO annotations based on evolutionary models"/>
</dbReference>
<dbReference type="PhylomeDB" id="O75843"/>
<dbReference type="TreeFam" id="TF300367"/>
<dbReference type="PathwayCommons" id="O75843"/>
<dbReference type="Reactome" id="R-HSA-432720">
    <property type="pathway name" value="Lysosome Vesicle Biogenesis"/>
</dbReference>
<dbReference type="SignaLink" id="O75843"/>
<dbReference type="SIGNOR" id="O75843"/>
<dbReference type="BioGRID-ORCS" id="8906">
    <property type="hits" value="43 hits in 1157 CRISPR screens"/>
</dbReference>
<dbReference type="ChiTaRS" id="AP1G2">
    <property type="organism name" value="human"/>
</dbReference>
<dbReference type="EvolutionaryTrace" id="O75843"/>
<dbReference type="GeneWiki" id="AP1G2"/>
<dbReference type="GenomeRNAi" id="8906"/>
<dbReference type="Pharos" id="O75843">
    <property type="development level" value="Tbio"/>
</dbReference>
<dbReference type="PRO" id="PR:O75843"/>
<dbReference type="Proteomes" id="UP000005640">
    <property type="component" value="Chromosome 14"/>
</dbReference>
<dbReference type="RNAct" id="O75843">
    <property type="molecule type" value="protein"/>
</dbReference>
<dbReference type="Bgee" id="ENSG00000213983">
    <property type="expression patterns" value="Expressed in right hemisphere of cerebellum and 179 other cell types or tissues"/>
</dbReference>
<dbReference type="ExpressionAtlas" id="O75843">
    <property type="expression patterns" value="baseline and differential"/>
</dbReference>
<dbReference type="GO" id="GO:0030121">
    <property type="term" value="C:AP-1 adaptor complex"/>
    <property type="evidence" value="ECO:0000318"/>
    <property type="project" value="GO_Central"/>
</dbReference>
<dbReference type="GO" id="GO:0010008">
    <property type="term" value="C:endosome membrane"/>
    <property type="evidence" value="ECO:0007669"/>
    <property type="project" value="UniProtKB-SubCell"/>
</dbReference>
<dbReference type="GO" id="GO:0005794">
    <property type="term" value="C:Golgi apparatus"/>
    <property type="evidence" value="ECO:0000304"/>
    <property type="project" value="ProtInc"/>
</dbReference>
<dbReference type="GO" id="GO:0000139">
    <property type="term" value="C:Golgi membrane"/>
    <property type="evidence" value="ECO:0000304"/>
    <property type="project" value="Reactome"/>
</dbReference>
<dbReference type="GO" id="GO:0005798">
    <property type="term" value="C:Golgi-associated vesicle"/>
    <property type="evidence" value="ECO:0000314"/>
    <property type="project" value="UniProtKB"/>
</dbReference>
<dbReference type="GO" id="GO:0016020">
    <property type="term" value="C:membrane"/>
    <property type="evidence" value="ECO:0000314"/>
    <property type="project" value="UniProtKB"/>
</dbReference>
<dbReference type="GO" id="GO:0045202">
    <property type="term" value="C:synapse"/>
    <property type="evidence" value="ECO:0007669"/>
    <property type="project" value="Ensembl"/>
</dbReference>
<dbReference type="GO" id="GO:0030133">
    <property type="term" value="C:transport vesicle"/>
    <property type="evidence" value="ECO:0000314"/>
    <property type="project" value="UniProtKB"/>
</dbReference>
<dbReference type="GO" id="GO:0035615">
    <property type="term" value="F:clathrin adaptor activity"/>
    <property type="evidence" value="ECO:0000318"/>
    <property type="project" value="GO_Central"/>
</dbReference>
<dbReference type="GO" id="GO:0006896">
    <property type="term" value="P:Golgi to vacuole transport"/>
    <property type="evidence" value="ECO:0000318"/>
    <property type="project" value="GO_Central"/>
</dbReference>
<dbReference type="GO" id="GO:0006886">
    <property type="term" value="P:intracellular protein transport"/>
    <property type="evidence" value="ECO:0007669"/>
    <property type="project" value="InterPro"/>
</dbReference>
<dbReference type="GO" id="GO:0016192">
    <property type="term" value="P:vesicle-mediated transport"/>
    <property type="evidence" value="ECO:0000303"/>
    <property type="project" value="UniProtKB"/>
</dbReference>
<dbReference type="FunFam" id="1.25.10.10:FF:000030">
    <property type="entry name" value="AP-1 complex subunit gamma"/>
    <property type="match status" value="1"/>
</dbReference>
<dbReference type="FunFam" id="2.60.40.1230:FF:000004">
    <property type="entry name" value="AP-1 complex subunit gamma"/>
    <property type="match status" value="1"/>
</dbReference>
<dbReference type="Gene3D" id="2.60.40.1230">
    <property type="match status" value="1"/>
</dbReference>
<dbReference type="Gene3D" id="1.25.10.10">
    <property type="entry name" value="Leucine-rich Repeat Variant"/>
    <property type="match status" value="1"/>
</dbReference>
<dbReference type="InterPro" id="IPR050840">
    <property type="entry name" value="Adaptor_Complx_Large_Subunit"/>
</dbReference>
<dbReference type="InterPro" id="IPR017107">
    <property type="entry name" value="AP1_complex_gsu"/>
</dbReference>
<dbReference type="InterPro" id="IPR011989">
    <property type="entry name" value="ARM-like"/>
</dbReference>
<dbReference type="InterPro" id="IPR016024">
    <property type="entry name" value="ARM-type_fold"/>
</dbReference>
<dbReference type="InterPro" id="IPR002553">
    <property type="entry name" value="Clathrin/coatomer_adapt-like_N"/>
</dbReference>
<dbReference type="InterPro" id="IPR008152">
    <property type="entry name" value="Clathrin_a/b/g-adaptin_app_Ig"/>
</dbReference>
<dbReference type="InterPro" id="IPR013041">
    <property type="entry name" value="Clathrin_app_Ig-like_sf"/>
</dbReference>
<dbReference type="InterPro" id="IPR008153">
    <property type="entry name" value="GAE_dom"/>
</dbReference>
<dbReference type="PANTHER" id="PTHR22780">
    <property type="entry name" value="ADAPTIN, ALPHA/GAMMA/EPSILON"/>
    <property type="match status" value="1"/>
</dbReference>
<dbReference type="Pfam" id="PF01602">
    <property type="entry name" value="Adaptin_N"/>
    <property type="match status" value="1"/>
</dbReference>
<dbReference type="Pfam" id="PF02883">
    <property type="entry name" value="Alpha_adaptinC2"/>
    <property type="match status" value="1"/>
</dbReference>
<dbReference type="PIRSF" id="PIRSF037094">
    <property type="entry name" value="AP1_complex_gamma"/>
    <property type="match status" value="1"/>
</dbReference>
<dbReference type="SMART" id="SM00809">
    <property type="entry name" value="Alpha_adaptinC2"/>
    <property type="match status" value="1"/>
</dbReference>
<dbReference type="SUPFAM" id="SSF48371">
    <property type="entry name" value="ARM repeat"/>
    <property type="match status" value="1"/>
</dbReference>
<dbReference type="SUPFAM" id="SSF49348">
    <property type="entry name" value="Clathrin adaptor appendage domain"/>
    <property type="match status" value="1"/>
</dbReference>
<dbReference type="PROSITE" id="PS50180">
    <property type="entry name" value="GAE"/>
    <property type="match status" value="1"/>
</dbReference>
<comment type="function">
    <text evidence="7">May function in protein sorting in late endosomes or multivesucular bodies (MVBs).</text>
</comment>
<comment type="function">
    <text evidence="5 6">(Microbial infection) Involved in MVB-assisted maturation of hepatitis B virus (HBV).</text>
</comment>
<comment type="subunit">
    <text evidence="4 7">May interact with AP1S1/Sigma1A-adaptin and AP1S2/Sigma1B-adaptin (PubMed:9733768). Probably does not interact with APB1 (PubMed:9733768). Interacts (via GAE domain) with RABEP1, NECAP1, CLINT1 and AFTPH/aftiphilin (PubMed:14665628).</text>
</comment>
<comment type="subunit">
    <text evidence="3 5">(Microbial infection) Interacts with HBV major surface antigen L. Interacts with HBV core protein C in a ubiquitin-dependent manner.</text>
</comment>
<comment type="interaction">
    <interactant intactId="EBI-373637">
        <id>O75843</id>
    </interactant>
    <interactant intactId="EBI-447043">
        <id>Q15276</id>
        <label>RABEP1</label>
    </interactant>
    <organismsDiffer>false</organismsDiffer>
    <experiments>2</experiments>
</comment>
<comment type="interaction">
    <interactant intactId="EBI-373637">
        <id>O75843</id>
    </interactant>
    <interactant intactId="EBI-16065097">
        <id>P03139-1</id>
        <label>S</label>
    </interactant>
    <organismsDiffer>true</organismsDiffer>
    <experiments>6</experiments>
</comment>
<comment type="subcellular location">
    <subcellularLocation>
        <location evidence="3 8">Golgi apparatus membrane</location>
        <topology>Peripheral membrane protein</topology>
        <orientation evidence="3">Cytoplasmic side</orientation>
    </subcellularLocation>
    <subcellularLocation>
        <location evidence="7">Cytoplasmic vesicle membrane</location>
        <topology>Peripheral membrane protein</topology>
    </subcellularLocation>
    <subcellularLocation>
        <location evidence="5">Endosome membrane</location>
        <topology>Peripheral membrane protein</topology>
    </subcellularLocation>
    <text>Mainly localized to perinuclear vesicular structures (PubMed:9733768). Colocalizes with HBV major surface antigen L and HBV core protein C in CD63-containing compartments (PubMed:16867982). Colocalizes with HBV major surface antigen L to cis-Golgi-like structures (PubMed:11333915).</text>
</comment>
<comment type="tissue specificity">
    <text>Expressed in all but one (skeletal muscle) tissues examined.</text>
</comment>
<comment type="similarity">
    <text evidence="9">Belongs to the adaptor complexes large subunit family.</text>
</comment>
<comment type="caution">
    <text evidence="9">Does not appear to be a subunit of the clathrin-associated adaptor protein complex 1 (AP-1).</text>
</comment>
<comment type="sequence caution" evidence="9">
    <conflict type="frameshift">
        <sequence resource="EMBL-CDS" id="AAC67390"/>
    </conflict>
</comment>
<protein>
    <recommendedName>
        <fullName>AP-1 complex subunit gamma-like 2</fullName>
    </recommendedName>
    <alternativeName>
        <fullName>Gamma2-adaptin</fullName>
        <shortName>G2ad</shortName>
    </alternativeName>
</protein>
<evidence type="ECO:0000255" key="1">
    <source>
        <dbReference type="PROSITE-ProRule" id="PRU00093"/>
    </source>
</evidence>
<evidence type="ECO:0000256" key="2">
    <source>
        <dbReference type="SAM" id="MobiDB-lite"/>
    </source>
</evidence>
<evidence type="ECO:0000269" key="3">
    <source>
    </source>
</evidence>
<evidence type="ECO:0000269" key="4">
    <source>
    </source>
</evidence>
<evidence type="ECO:0000269" key="5">
    <source>
    </source>
</evidence>
<evidence type="ECO:0000269" key="6">
    <source>
    </source>
</evidence>
<evidence type="ECO:0000269" key="7">
    <source>
    </source>
</evidence>
<evidence type="ECO:0000269" key="8">
    <source>
    </source>
</evidence>
<evidence type="ECO:0000305" key="9"/>
<evidence type="ECO:0007829" key="10">
    <source>
        <dbReference type="PDB" id="2E9G"/>
    </source>
</evidence>
<evidence type="ECO:0007829" key="11">
    <source>
        <dbReference type="PDB" id="3ZHF"/>
    </source>
</evidence>
<name>AP1G2_HUMAN</name>
<accession>O75843</accession>
<accession>D3DS51</accession>
<accession>O75504</accession>
<keyword id="KW-0002">3D-structure</keyword>
<keyword id="KW-0968">Cytoplasmic vesicle</keyword>
<keyword id="KW-0967">Endosome</keyword>
<keyword id="KW-0333">Golgi apparatus</keyword>
<keyword id="KW-0945">Host-virus interaction</keyword>
<keyword id="KW-0472">Membrane</keyword>
<keyword id="KW-0653">Protein transport</keyword>
<keyword id="KW-1267">Proteomics identification</keyword>
<keyword id="KW-1185">Reference proteome</keyword>
<keyword id="KW-0813">Transport</keyword>
<feature type="chain" id="PRO_0000193760" description="AP-1 complex subunit gamma-like 2">
    <location>
        <begin position="1"/>
        <end position="785"/>
    </location>
</feature>
<feature type="domain" description="GAE" evidence="1">
    <location>
        <begin position="665"/>
        <end position="780"/>
    </location>
</feature>
<feature type="region of interest" description="Essential for ubiquitin-binding">
    <location>
        <begin position="369"/>
        <end position="379"/>
    </location>
</feature>
<feature type="region of interest" description="Disordered" evidence="2">
    <location>
        <begin position="592"/>
        <end position="617"/>
    </location>
</feature>
<feature type="sequence variant" id="VAR_024363" description="In dbSNP:rs12897422.">
    <original>S</original>
    <variation>F</variation>
    <location>
        <position position="377"/>
    </location>
</feature>
<feature type="mutagenesis site" description="Greatly diminishes interaction with ubiquitin; when associated with G-372." evidence="5">
    <original>L</original>
    <variation>G</variation>
    <location>
        <position position="369"/>
    </location>
</feature>
<feature type="mutagenesis site" description="Greatly diminishes interaction with ubiquitin; when associated with G-369." evidence="5">
    <original>A</original>
    <variation>G</variation>
    <location>
        <position position="372"/>
    </location>
</feature>
<feature type="mutagenesis site" description="Greatly diminishes interaction with ubiquitin; when associated with G-376." evidence="5">
    <original>A</original>
    <variation>G</variation>
    <location>
        <position position="372"/>
    </location>
</feature>
<feature type="mutagenesis site" description="Greatly diminishes interaction with ubiquitin; when associated with G-372." evidence="5">
    <original>S</original>
    <variation>G</variation>
    <location>
        <position position="376"/>
    </location>
</feature>
<feature type="sequence conflict" description="In Ref. 2; AAC67390." evidence="9" ref="2">
    <original>ERS</original>
    <variation>GRN</variation>
    <location>
        <begin position="204"/>
        <end position="206"/>
    </location>
</feature>
<feature type="sequence conflict" description="In Ref. 2; AAC67390." evidence="9" ref="2">
    <original>A</original>
    <variation>C</variation>
    <location>
        <position position="399"/>
    </location>
</feature>
<feature type="sequence conflict" description="In Ref. 2; AAC67390." evidence="9" ref="2">
    <original>A</original>
    <variation>D</variation>
    <location>
        <position position="402"/>
    </location>
</feature>
<feature type="sequence conflict" description="In Ref. 2; AAC67390." evidence="9" ref="2">
    <original>K</original>
    <variation>T</variation>
    <location>
        <position position="416"/>
    </location>
</feature>
<feature type="sequence conflict" description="In Ref. 2; AAC67390." evidence="9" ref="2">
    <original>T</original>
    <variation>S</variation>
    <location>
        <position position="429"/>
    </location>
</feature>
<feature type="sequence conflict" description="In Ref. 2; AAC67390." evidence="9" ref="2">
    <original>VAN</original>
    <variation>AGHT</variation>
    <location>
        <begin position="439"/>
        <end position="441"/>
    </location>
</feature>
<feature type="strand" evidence="11">
    <location>
        <begin position="670"/>
        <end position="675"/>
    </location>
</feature>
<feature type="strand" evidence="11">
    <location>
        <begin position="678"/>
        <end position="685"/>
    </location>
</feature>
<feature type="strand" evidence="11">
    <location>
        <begin position="693"/>
        <end position="702"/>
    </location>
</feature>
<feature type="strand" evidence="11">
    <location>
        <begin position="704"/>
        <end position="706"/>
    </location>
</feature>
<feature type="strand" evidence="11">
    <location>
        <begin position="708"/>
        <end position="716"/>
    </location>
</feature>
<feature type="strand" evidence="11">
    <location>
        <begin position="721"/>
        <end position="725"/>
    </location>
</feature>
<feature type="strand" evidence="10">
    <location>
        <begin position="731"/>
        <end position="733"/>
    </location>
</feature>
<feature type="turn" evidence="11">
    <location>
        <begin position="735"/>
        <end position="737"/>
    </location>
</feature>
<feature type="strand" evidence="11">
    <location>
        <begin position="741"/>
        <end position="748"/>
    </location>
</feature>
<feature type="strand" evidence="11">
    <location>
        <begin position="758"/>
        <end position="765"/>
    </location>
</feature>
<feature type="strand" evidence="11">
    <location>
        <begin position="768"/>
        <end position="775"/>
    </location>
</feature>
<feature type="helix" evidence="11">
    <location>
        <begin position="781"/>
        <end position="783"/>
    </location>
</feature>
<organism>
    <name type="scientific">Homo sapiens</name>
    <name type="common">Human</name>
    <dbReference type="NCBI Taxonomy" id="9606"/>
    <lineage>
        <taxon>Eukaryota</taxon>
        <taxon>Metazoa</taxon>
        <taxon>Chordata</taxon>
        <taxon>Craniata</taxon>
        <taxon>Vertebrata</taxon>
        <taxon>Euteleostomi</taxon>
        <taxon>Mammalia</taxon>
        <taxon>Eutheria</taxon>
        <taxon>Euarchontoglires</taxon>
        <taxon>Primates</taxon>
        <taxon>Haplorrhini</taxon>
        <taxon>Catarrhini</taxon>
        <taxon>Hominidae</taxon>
        <taxon>Homo</taxon>
    </lineage>
</organism>
<gene>
    <name type="primary">AP1G2</name>
</gene>
<proteinExistence type="evidence at protein level"/>